<sequence>MKEFKVTTGPLPGSEKIYVEGERFPFLRVPMRRIRMSDTILENGEREKNEDVVVYDTSGPYTDTSYEVNLHRGVPKIREQWIEDRGDTLRLEGLSSEYGRMRQSDASLEELRYEHVCTRPRAAKDGCATQLYYARQGIVTPEMEFVAIRENQLIDQVRTRYRAEEGEPLGAVIPRKITPEFVRDEIAAGRAILPANINHPESEPMIIGRNFLVKINANIGNSPISSTIEEEVEKAVWAIRWGADTVMDLSTGDHIHETREWIIRNSPVPIGTVPLYQTLEKVQGDVTKLNWEIFRDTLIEQAEQGVDYFTIHAGLRWHHVPLTLRRLTGIVSRGGSIIANWCTTHKRESFIYEHFEEICRILAHYDVAISLGDGLRPGCIHDANDAAQIAELKTLGELTEIAWKYNVQTIIEGPGHVPMHKIRENMEIQLEACHGAPFYTLGPLVSDVASGYDHITSAIGAAQIGWFGTAMLCYVTQKEHLGLPNREDVREGVVTYKLAAHAADLAKGHPTAYWRDYMMSKARFEFRWKDQFHLSLDPEKAIQFHDATLPDEGHKEAHFCSMCGEHFCSMRANKNFRKLLNEEAVSK</sequence>
<keyword id="KW-0004">4Fe-4S</keyword>
<keyword id="KW-0408">Iron</keyword>
<keyword id="KW-0411">Iron-sulfur</keyword>
<keyword id="KW-0456">Lyase</keyword>
<keyword id="KW-0479">Metal-binding</keyword>
<keyword id="KW-0949">S-adenosyl-L-methionine</keyword>
<keyword id="KW-0784">Thiamine biosynthesis</keyword>
<keyword id="KW-0862">Zinc</keyword>
<comment type="function">
    <text evidence="1">Catalyzes the synthesis of the hydroxymethylpyrimidine phosphate (HMP-P) moiety of thiamine from aminoimidazole ribotide (AIR) in a radical S-adenosyl-L-methionine (SAM)-dependent reaction.</text>
</comment>
<comment type="catalytic activity">
    <reaction evidence="1">
        <text>5-amino-1-(5-phospho-beta-D-ribosyl)imidazole + S-adenosyl-L-methionine = 4-amino-2-methyl-5-(phosphooxymethyl)pyrimidine + CO + 5'-deoxyadenosine + formate + L-methionine + 3 H(+)</text>
        <dbReference type="Rhea" id="RHEA:24840"/>
        <dbReference type="ChEBI" id="CHEBI:15378"/>
        <dbReference type="ChEBI" id="CHEBI:15740"/>
        <dbReference type="ChEBI" id="CHEBI:17245"/>
        <dbReference type="ChEBI" id="CHEBI:17319"/>
        <dbReference type="ChEBI" id="CHEBI:57844"/>
        <dbReference type="ChEBI" id="CHEBI:58354"/>
        <dbReference type="ChEBI" id="CHEBI:59789"/>
        <dbReference type="ChEBI" id="CHEBI:137981"/>
        <dbReference type="EC" id="4.1.99.17"/>
    </reaction>
</comment>
<comment type="cofactor">
    <cofactor evidence="1">
        <name>[4Fe-4S] cluster</name>
        <dbReference type="ChEBI" id="CHEBI:49883"/>
    </cofactor>
    <text evidence="1">Binds 1 [4Fe-4S] cluster per subunit. The cluster is coordinated with 3 cysteines and an exchangeable S-adenosyl-L-methionine.</text>
</comment>
<comment type="pathway">
    <text evidence="1">Cofactor biosynthesis; thiamine diphosphate biosynthesis.</text>
</comment>
<comment type="similarity">
    <text evidence="1">Belongs to the ThiC family.</text>
</comment>
<organism>
    <name type="scientific">Porphyromonas gingivalis (strain ATCC 33277 / DSM 20709 / CIP 103683 / JCM 12257 / NCTC 11834 / 2561)</name>
    <dbReference type="NCBI Taxonomy" id="431947"/>
    <lineage>
        <taxon>Bacteria</taxon>
        <taxon>Pseudomonadati</taxon>
        <taxon>Bacteroidota</taxon>
        <taxon>Bacteroidia</taxon>
        <taxon>Bacteroidales</taxon>
        <taxon>Porphyromonadaceae</taxon>
        <taxon>Porphyromonas</taxon>
    </lineage>
</organism>
<reference key="1">
    <citation type="journal article" date="2008" name="DNA Res.">
        <title>Determination of the genome sequence of Porphyromonas gingivalis strain ATCC 33277 and genomic comparison with strain W83 revealed extensive genome rearrangements in P. gingivalis.</title>
        <authorList>
            <person name="Naito M."/>
            <person name="Hirakawa H."/>
            <person name="Yamashita A."/>
            <person name="Ohara N."/>
            <person name="Shoji M."/>
            <person name="Yukitake H."/>
            <person name="Nakayama K."/>
            <person name="Toh H."/>
            <person name="Yoshimura F."/>
            <person name="Kuhara S."/>
            <person name="Hattori M."/>
            <person name="Hayashi T."/>
            <person name="Nakayama K."/>
        </authorList>
    </citation>
    <scope>NUCLEOTIDE SEQUENCE [LARGE SCALE GENOMIC DNA]</scope>
    <source>
        <strain>ATCC 33277 / DSM 20709 / CIP 103683 / JCM 12257 / NCTC 11834 / 2561</strain>
    </source>
</reference>
<protein>
    <recommendedName>
        <fullName evidence="1">Phosphomethylpyrimidine synthase</fullName>
        <ecNumber evidence="1">4.1.99.17</ecNumber>
    </recommendedName>
    <alternativeName>
        <fullName evidence="1">Hydroxymethylpyrimidine phosphate synthase</fullName>
        <shortName evidence="1">HMP-P synthase</shortName>
        <shortName evidence="1">HMP-phosphate synthase</shortName>
        <shortName evidence="1">HMPP synthase</shortName>
    </alternativeName>
    <alternativeName>
        <fullName evidence="1">Thiamine biosynthesis protein ThiC</fullName>
    </alternativeName>
</protein>
<evidence type="ECO:0000255" key="1">
    <source>
        <dbReference type="HAMAP-Rule" id="MF_00089"/>
    </source>
</evidence>
<accession>B2RH34</accession>
<proteinExistence type="inferred from homology"/>
<gene>
    <name evidence="1" type="primary">thiC</name>
    <name type="ordered locus">PGN_0160</name>
</gene>
<feature type="chain" id="PRO_1000093222" description="Phosphomethylpyrimidine synthase">
    <location>
        <begin position="1"/>
        <end position="587"/>
    </location>
</feature>
<feature type="binding site" evidence="1">
    <location>
        <position position="218"/>
    </location>
    <ligand>
        <name>substrate</name>
    </ligand>
</feature>
<feature type="binding site" evidence="1">
    <location>
        <position position="247"/>
    </location>
    <ligand>
        <name>substrate</name>
    </ligand>
</feature>
<feature type="binding site" evidence="1">
    <location>
        <position position="276"/>
    </location>
    <ligand>
        <name>substrate</name>
    </ligand>
</feature>
<feature type="binding site" evidence="1">
    <location>
        <position position="312"/>
    </location>
    <ligand>
        <name>substrate</name>
    </ligand>
</feature>
<feature type="binding site" evidence="1">
    <location>
        <begin position="332"/>
        <end position="334"/>
    </location>
    <ligand>
        <name>substrate</name>
    </ligand>
</feature>
<feature type="binding site" evidence="1">
    <location>
        <begin position="373"/>
        <end position="376"/>
    </location>
    <ligand>
        <name>substrate</name>
    </ligand>
</feature>
<feature type="binding site" evidence="1">
    <location>
        <position position="412"/>
    </location>
    <ligand>
        <name>substrate</name>
    </ligand>
</feature>
<feature type="binding site" evidence="1">
    <location>
        <position position="416"/>
    </location>
    <ligand>
        <name>Zn(2+)</name>
        <dbReference type="ChEBI" id="CHEBI:29105"/>
    </ligand>
</feature>
<feature type="binding site" evidence="1">
    <location>
        <position position="439"/>
    </location>
    <ligand>
        <name>substrate</name>
    </ligand>
</feature>
<feature type="binding site" evidence="1">
    <location>
        <position position="480"/>
    </location>
    <ligand>
        <name>Zn(2+)</name>
        <dbReference type="ChEBI" id="CHEBI:29105"/>
    </ligand>
</feature>
<feature type="binding site" evidence="1">
    <location>
        <position position="560"/>
    </location>
    <ligand>
        <name>[4Fe-4S] cluster</name>
        <dbReference type="ChEBI" id="CHEBI:49883"/>
        <note>4Fe-4S-S-AdoMet</note>
    </ligand>
</feature>
<feature type="binding site" evidence="1">
    <location>
        <position position="563"/>
    </location>
    <ligand>
        <name>[4Fe-4S] cluster</name>
        <dbReference type="ChEBI" id="CHEBI:49883"/>
        <note>4Fe-4S-S-AdoMet</note>
    </ligand>
</feature>
<feature type="binding site" evidence="1">
    <location>
        <position position="568"/>
    </location>
    <ligand>
        <name>[4Fe-4S] cluster</name>
        <dbReference type="ChEBI" id="CHEBI:49883"/>
        <note>4Fe-4S-S-AdoMet</note>
    </ligand>
</feature>
<name>THIC_PORG3</name>
<dbReference type="EC" id="4.1.99.17" evidence="1"/>
<dbReference type="EMBL" id="AP009380">
    <property type="protein sequence ID" value="BAG32679.1"/>
    <property type="molecule type" value="Genomic_DNA"/>
</dbReference>
<dbReference type="RefSeq" id="WP_012457290.1">
    <property type="nucleotide sequence ID" value="NC_010729.1"/>
</dbReference>
<dbReference type="SMR" id="B2RH34"/>
<dbReference type="GeneID" id="29255410"/>
<dbReference type="KEGG" id="pgn:PGN_0160"/>
<dbReference type="eggNOG" id="COG0422">
    <property type="taxonomic scope" value="Bacteria"/>
</dbReference>
<dbReference type="HOGENOM" id="CLU_013181_2_1_10"/>
<dbReference type="OrthoDB" id="9805897at2"/>
<dbReference type="BioCyc" id="PGIN431947:G1G2V-178-MONOMER"/>
<dbReference type="UniPathway" id="UPA00060"/>
<dbReference type="Proteomes" id="UP000008842">
    <property type="component" value="Chromosome"/>
</dbReference>
<dbReference type="GO" id="GO:0005829">
    <property type="term" value="C:cytosol"/>
    <property type="evidence" value="ECO:0007669"/>
    <property type="project" value="TreeGrafter"/>
</dbReference>
<dbReference type="GO" id="GO:0051539">
    <property type="term" value="F:4 iron, 4 sulfur cluster binding"/>
    <property type="evidence" value="ECO:0007669"/>
    <property type="project" value="UniProtKB-KW"/>
</dbReference>
<dbReference type="GO" id="GO:0016830">
    <property type="term" value="F:carbon-carbon lyase activity"/>
    <property type="evidence" value="ECO:0007669"/>
    <property type="project" value="InterPro"/>
</dbReference>
<dbReference type="GO" id="GO:0008270">
    <property type="term" value="F:zinc ion binding"/>
    <property type="evidence" value="ECO:0007669"/>
    <property type="project" value="UniProtKB-UniRule"/>
</dbReference>
<dbReference type="GO" id="GO:0009228">
    <property type="term" value="P:thiamine biosynthetic process"/>
    <property type="evidence" value="ECO:0007669"/>
    <property type="project" value="UniProtKB-KW"/>
</dbReference>
<dbReference type="GO" id="GO:0009229">
    <property type="term" value="P:thiamine diphosphate biosynthetic process"/>
    <property type="evidence" value="ECO:0007669"/>
    <property type="project" value="UniProtKB-UniRule"/>
</dbReference>
<dbReference type="FunFam" id="3.20.20.540:FF:000001">
    <property type="entry name" value="Phosphomethylpyrimidine synthase"/>
    <property type="match status" value="1"/>
</dbReference>
<dbReference type="Gene3D" id="6.10.250.620">
    <property type="match status" value="1"/>
</dbReference>
<dbReference type="Gene3D" id="3.20.20.540">
    <property type="entry name" value="Radical SAM ThiC family, central domain"/>
    <property type="match status" value="1"/>
</dbReference>
<dbReference type="HAMAP" id="MF_00089">
    <property type="entry name" value="ThiC"/>
    <property type="match status" value="1"/>
</dbReference>
<dbReference type="InterPro" id="IPR037509">
    <property type="entry name" value="ThiC"/>
</dbReference>
<dbReference type="InterPro" id="IPR025747">
    <property type="entry name" value="ThiC-associated_dom"/>
</dbReference>
<dbReference type="InterPro" id="IPR038521">
    <property type="entry name" value="ThiC/Bza_core_dom"/>
</dbReference>
<dbReference type="InterPro" id="IPR002817">
    <property type="entry name" value="ThiC/BzaA/B"/>
</dbReference>
<dbReference type="NCBIfam" id="NF006763">
    <property type="entry name" value="PRK09284.1"/>
    <property type="match status" value="1"/>
</dbReference>
<dbReference type="NCBIfam" id="NF009895">
    <property type="entry name" value="PRK13352.1"/>
    <property type="match status" value="1"/>
</dbReference>
<dbReference type="NCBIfam" id="TIGR00190">
    <property type="entry name" value="thiC"/>
    <property type="match status" value="1"/>
</dbReference>
<dbReference type="PANTHER" id="PTHR30557:SF1">
    <property type="entry name" value="PHOSPHOMETHYLPYRIMIDINE SYNTHASE, CHLOROPLASTIC"/>
    <property type="match status" value="1"/>
</dbReference>
<dbReference type="PANTHER" id="PTHR30557">
    <property type="entry name" value="THIAMINE BIOSYNTHESIS PROTEIN THIC"/>
    <property type="match status" value="1"/>
</dbReference>
<dbReference type="Pfam" id="PF13667">
    <property type="entry name" value="ThiC-associated"/>
    <property type="match status" value="1"/>
</dbReference>
<dbReference type="Pfam" id="PF01964">
    <property type="entry name" value="ThiC_Rad_SAM"/>
    <property type="match status" value="1"/>
</dbReference>
<dbReference type="SFLD" id="SFLDF00407">
    <property type="entry name" value="phosphomethylpyrimidine_syntha"/>
    <property type="match status" value="1"/>
</dbReference>
<dbReference type="SFLD" id="SFLDG01114">
    <property type="entry name" value="phosphomethylpyrimidine_syntha"/>
    <property type="match status" value="1"/>
</dbReference>
<dbReference type="SFLD" id="SFLDS00113">
    <property type="entry name" value="Radical_SAM_Phosphomethylpyrim"/>
    <property type="match status" value="1"/>
</dbReference>